<keyword id="KW-0131">Cell cycle</keyword>
<keyword id="KW-0132">Cell division</keyword>
<keyword id="KW-1003">Cell membrane</keyword>
<keyword id="KW-0133">Cell shape</keyword>
<keyword id="KW-0961">Cell wall biogenesis/degradation</keyword>
<keyword id="KW-0328">Glycosyltransferase</keyword>
<keyword id="KW-0472">Membrane</keyword>
<keyword id="KW-0573">Peptidoglycan synthesis</keyword>
<keyword id="KW-0808">Transferase</keyword>
<dbReference type="EC" id="2.4.1.227" evidence="1"/>
<dbReference type="EMBL" id="CP000485">
    <property type="protein sequence ID" value="ABK86774.1"/>
    <property type="status" value="ALT_INIT"/>
    <property type="molecule type" value="Genomic_DNA"/>
</dbReference>
<dbReference type="SMR" id="A0RHT1"/>
<dbReference type="CAZy" id="GT28">
    <property type="family name" value="Glycosyltransferase Family 28"/>
</dbReference>
<dbReference type="KEGG" id="btl:BALH_3540"/>
<dbReference type="HOGENOM" id="CLU_037404_0_1_9"/>
<dbReference type="UniPathway" id="UPA00219"/>
<dbReference type="GO" id="GO:0005886">
    <property type="term" value="C:plasma membrane"/>
    <property type="evidence" value="ECO:0007669"/>
    <property type="project" value="UniProtKB-SubCell"/>
</dbReference>
<dbReference type="GO" id="GO:0051991">
    <property type="term" value="F:UDP-N-acetyl-D-glucosamine:N-acetylmuramoyl-L-alanyl-D-glutamyl-meso-2,6-diaminopimelyl-D-alanyl-D-alanine-diphosphoundecaprenol 4-beta-N-acetylglucosaminlytransferase activity"/>
    <property type="evidence" value="ECO:0007669"/>
    <property type="project" value="RHEA"/>
</dbReference>
<dbReference type="GO" id="GO:0050511">
    <property type="term" value="F:undecaprenyldiphospho-muramoylpentapeptide beta-N-acetylglucosaminyltransferase activity"/>
    <property type="evidence" value="ECO:0007669"/>
    <property type="project" value="UniProtKB-UniRule"/>
</dbReference>
<dbReference type="GO" id="GO:0005975">
    <property type="term" value="P:carbohydrate metabolic process"/>
    <property type="evidence" value="ECO:0007669"/>
    <property type="project" value="InterPro"/>
</dbReference>
<dbReference type="GO" id="GO:0051301">
    <property type="term" value="P:cell division"/>
    <property type="evidence" value="ECO:0007669"/>
    <property type="project" value="UniProtKB-KW"/>
</dbReference>
<dbReference type="GO" id="GO:0071555">
    <property type="term" value="P:cell wall organization"/>
    <property type="evidence" value="ECO:0007669"/>
    <property type="project" value="UniProtKB-KW"/>
</dbReference>
<dbReference type="GO" id="GO:0030259">
    <property type="term" value="P:lipid glycosylation"/>
    <property type="evidence" value="ECO:0007669"/>
    <property type="project" value="UniProtKB-UniRule"/>
</dbReference>
<dbReference type="GO" id="GO:0009252">
    <property type="term" value="P:peptidoglycan biosynthetic process"/>
    <property type="evidence" value="ECO:0007669"/>
    <property type="project" value="UniProtKB-UniRule"/>
</dbReference>
<dbReference type="GO" id="GO:0008360">
    <property type="term" value="P:regulation of cell shape"/>
    <property type="evidence" value="ECO:0007669"/>
    <property type="project" value="UniProtKB-KW"/>
</dbReference>
<dbReference type="CDD" id="cd03785">
    <property type="entry name" value="GT28_MurG"/>
    <property type="match status" value="1"/>
</dbReference>
<dbReference type="Gene3D" id="3.40.50.2000">
    <property type="entry name" value="Glycogen Phosphorylase B"/>
    <property type="match status" value="2"/>
</dbReference>
<dbReference type="HAMAP" id="MF_00033">
    <property type="entry name" value="MurG"/>
    <property type="match status" value="1"/>
</dbReference>
<dbReference type="InterPro" id="IPR006009">
    <property type="entry name" value="GlcNAc_MurG"/>
</dbReference>
<dbReference type="InterPro" id="IPR007235">
    <property type="entry name" value="Glyco_trans_28_C"/>
</dbReference>
<dbReference type="InterPro" id="IPR004276">
    <property type="entry name" value="GlycoTrans_28_N"/>
</dbReference>
<dbReference type="NCBIfam" id="TIGR01133">
    <property type="entry name" value="murG"/>
    <property type="match status" value="1"/>
</dbReference>
<dbReference type="PANTHER" id="PTHR21015:SF22">
    <property type="entry name" value="GLYCOSYLTRANSFERASE"/>
    <property type="match status" value="1"/>
</dbReference>
<dbReference type="PANTHER" id="PTHR21015">
    <property type="entry name" value="UDP-N-ACETYLGLUCOSAMINE--N-ACETYLMURAMYL-(PENTAPEPTIDE) PYROPHOSPHORYL-UNDECAPRENOL N-ACETYLGLUCOSAMINE TRANSFERASE 1"/>
    <property type="match status" value="1"/>
</dbReference>
<dbReference type="Pfam" id="PF04101">
    <property type="entry name" value="Glyco_tran_28_C"/>
    <property type="match status" value="1"/>
</dbReference>
<dbReference type="Pfam" id="PF03033">
    <property type="entry name" value="Glyco_transf_28"/>
    <property type="match status" value="1"/>
</dbReference>
<dbReference type="SUPFAM" id="SSF53756">
    <property type="entry name" value="UDP-Glycosyltransferase/glycogen phosphorylase"/>
    <property type="match status" value="1"/>
</dbReference>
<name>MURG2_BACAH</name>
<protein>
    <recommendedName>
        <fullName evidence="1">UDP-N-acetylglucosamine--N-acetylmuramyl-(pentapeptide) pyrophosphoryl-undecaprenol N-acetylglucosamine transferase 2</fullName>
        <ecNumber evidence="1">2.4.1.227</ecNumber>
    </recommendedName>
    <alternativeName>
        <fullName evidence="1">Undecaprenyl-PP-MurNAc-pentapeptide-UDPGlcNAc GlcNAc transferase 2</fullName>
    </alternativeName>
</protein>
<proteinExistence type="inferred from homology"/>
<organism>
    <name type="scientific">Bacillus thuringiensis (strain Al Hakam)</name>
    <dbReference type="NCBI Taxonomy" id="412694"/>
    <lineage>
        <taxon>Bacteria</taxon>
        <taxon>Bacillati</taxon>
        <taxon>Bacillota</taxon>
        <taxon>Bacilli</taxon>
        <taxon>Bacillales</taxon>
        <taxon>Bacillaceae</taxon>
        <taxon>Bacillus</taxon>
        <taxon>Bacillus cereus group</taxon>
    </lineage>
</organism>
<sequence length="364" mass="39600">MRVLVSGGGTGGHIYPALALIREIKKLNPEARFLYIGTENGLESTIVPKAGIPFQSIVISGFKRKISLDNVKTVMRFLKGVQDSKRYIRRFNPDIVIGTGGYVCGPVVYAAAKLGIPTIVHEQNSVPGVTNKFLSRYVDKVAVCFEAAAEHFPQSKVVMTGNPRASEVMDQNGMKGKRSVGLSLPKKSVLIFGGSRGARPINDAFVEAIEQFGNKSYEILYVTGEVHYDKVMEAVKQKGNPNNVIIKPFIHNMPEVLTGVDLVVSRAGATTLAELTALGKPSVLIPSPYVTNNHQEKNARSVVDKGAAKMLLEKDLTAETLIRDIDEILLDAQTLQNMKLAAGQLGIPDAANKLYEVMNKLVKK</sequence>
<gene>
    <name evidence="1" type="primary">murG2</name>
    <name type="ordered locus">BALH_3540</name>
</gene>
<comment type="function">
    <text evidence="1">Cell wall formation. Catalyzes the transfer of a GlcNAc subunit on undecaprenyl-pyrophosphoryl-MurNAc-pentapeptide (lipid intermediate I) to form undecaprenyl-pyrophosphoryl-MurNAc-(pentapeptide)GlcNAc (lipid intermediate II).</text>
</comment>
<comment type="catalytic activity">
    <reaction evidence="1">
        <text>di-trans,octa-cis-undecaprenyl diphospho-N-acetyl-alpha-D-muramoyl-L-alanyl-D-glutamyl-meso-2,6-diaminopimeloyl-D-alanyl-D-alanine + UDP-N-acetyl-alpha-D-glucosamine = di-trans,octa-cis-undecaprenyl diphospho-[N-acetyl-alpha-D-glucosaminyl-(1-&gt;4)]-N-acetyl-alpha-D-muramoyl-L-alanyl-D-glutamyl-meso-2,6-diaminopimeloyl-D-alanyl-D-alanine + UDP + H(+)</text>
        <dbReference type="Rhea" id="RHEA:31227"/>
        <dbReference type="ChEBI" id="CHEBI:15378"/>
        <dbReference type="ChEBI" id="CHEBI:57705"/>
        <dbReference type="ChEBI" id="CHEBI:58223"/>
        <dbReference type="ChEBI" id="CHEBI:61387"/>
        <dbReference type="ChEBI" id="CHEBI:61388"/>
        <dbReference type="EC" id="2.4.1.227"/>
    </reaction>
</comment>
<comment type="pathway">
    <text evidence="1">Cell wall biogenesis; peptidoglycan biosynthesis.</text>
</comment>
<comment type="subcellular location">
    <subcellularLocation>
        <location evidence="1">Cell membrane</location>
        <topology evidence="1">Peripheral membrane protein</topology>
        <orientation evidence="1">Cytoplasmic side</orientation>
    </subcellularLocation>
</comment>
<comment type="similarity">
    <text evidence="1">Belongs to the glycosyltransferase 28 family. MurG subfamily.</text>
</comment>
<comment type="sequence caution" evidence="2">
    <conflict type="erroneous initiation">
        <sequence resource="EMBL-CDS" id="ABK86774"/>
    </conflict>
</comment>
<reference key="1">
    <citation type="journal article" date="2007" name="J. Bacteriol.">
        <title>The complete genome sequence of Bacillus thuringiensis Al Hakam.</title>
        <authorList>
            <person name="Challacombe J.F."/>
            <person name="Altherr M.R."/>
            <person name="Xie G."/>
            <person name="Bhotika S.S."/>
            <person name="Brown N."/>
            <person name="Bruce D."/>
            <person name="Campbell C.S."/>
            <person name="Campbell M.L."/>
            <person name="Chen J."/>
            <person name="Chertkov O."/>
            <person name="Cleland C."/>
            <person name="Dimitrijevic M."/>
            <person name="Doggett N.A."/>
            <person name="Fawcett J.J."/>
            <person name="Glavina T."/>
            <person name="Goodwin L.A."/>
            <person name="Green L.D."/>
            <person name="Han C.S."/>
            <person name="Hill K.K."/>
            <person name="Hitchcock P."/>
            <person name="Jackson P.J."/>
            <person name="Keim P."/>
            <person name="Kewalramani A.R."/>
            <person name="Longmire J."/>
            <person name="Lucas S."/>
            <person name="Malfatti S."/>
            <person name="Martinez D."/>
            <person name="McMurry K."/>
            <person name="Meincke L.J."/>
            <person name="Misra M."/>
            <person name="Moseman B.L."/>
            <person name="Mundt M."/>
            <person name="Munk A.C."/>
            <person name="Okinaka R.T."/>
            <person name="Parson-Quintana B."/>
            <person name="Reilly L.P."/>
            <person name="Richardson P."/>
            <person name="Robinson D.L."/>
            <person name="Saunders E."/>
            <person name="Tapia R."/>
            <person name="Tesmer J.G."/>
            <person name="Thayer N."/>
            <person name="Thompson L.S."/>
            <person name="Tice H."/>
            <person name="Ticknor L.O."/>
            <person name="Wills P.L."/>
            <person name="Gilna P."/>
            <person name="Brettin T.S."/>
        </authorList>
    </citation>
    <scope>NUCLEOTIDE SEQUENCE [LARGE SCALE GENOMIC DNA]</scope>
    <source>
        <strain>Al Hakam</strain>
    </source>
</reference>
<evidence type="ECO:0000255" key="1">
    <source>
        <dbReference type="HAMAP-Rule" id="MF_00033"/>
    </source>
</evidence>
<evidence type="ECO:0000305" key="2"/>
<feature type="chain" id="PRO_0000315067" description="UDP-N-acetylglucosamine--N-acetylmuramyl-(pentapeptide) pyrophosphoryl-undecaprenol N-acetylglucosamine transferase 2">
    <location>
        <begin position="1"/>
        <end position="364"/>
    </location>
</feature>
<feature type="binding site" evidence="1">
    <location>
        <begin position="10"/>
        <end position="12"/>
    </location>
    <ligand>
        <name>UDP-N-acetyl-alpha-D-glucosamine</name>
        <dbReference type="ChEBI" id="CHEBI:57705"/>
    </ligand>
</feature>
<feature type="binding site" evidence="1">
    <location>
        <position position="124"/>
    </location>
    <ligand>
        <name>UDP-N-acetyl-alpha-D-glucosamine</name>
        <dbReference type="ChEBI" id="CHEBI:57705"/>
    </ligand>
</feature>
<feature type="binding site" evidence="1">
    <location>
        <position position="195"/>
    </location>
    <ligand>
        <name>UDP-N-acetyl-alpha-D-glucosamine</name>
        <dbReference type="ChEBI" id="CHEBI:57705"/>
    </ligand>
</feature>
<feature type="binding site" evidence="1">
    <location>
        <position position="250"/>
    </location>
    <ligand>
        <name>UDP-N-acetyl-alpha-D-glucosamine</name>
        <dbReference type="ChEBI" id="CHEBI:57705"/>
    </ligand>
</feature>
<feature type="binding site" evidence="1">
    <location>
        <position position="295"/>
    </location>
    <ligand>
        <name>UDP-N-acetyl-alpha-D-glucosamine</name>
        <dbReference type="ChEBI" id="CHEBI:57705"/>
    </ligand>
</feature>
<accession>A0RHT1</accession>